<protein>
    <recommendedName>
        <fullName evidence="1">Probable cytosol aminopeptidase</fullName>
        <ecNumber evidence="1">3.4.11.1</ecNumber>
    </recommendedName>
    <alternativeName>
        <fullName evidence="1">Leucine aminopeptidase</fullName>
        <shortName evidence="1">LAP</shortName>
        <ecNumber evidence="1">3.4.11.10</ecNumber>
    </alternativeName>
    <alternativeName>
        <fullName evidence="1">Leucyl aminopeptidase</fullName>
    </alternativeName>
</protein>
<dbReference type="EC" id="3.4.11.1" evidence="1"/>
<dbReference type="EC" id="3.4.11.10" evidence="1"/>
<dbReference type="EMBL" id="CP000521">
    <property type="protein sequence ID" value="ABO10702.2"/>
    <property type="molecule type" value="Genomic_DNA"/>
</dbReference>
<dbReference type="RefSeq" id="WP_000673449.1">
    <property type="nucleotide sequence ID" value="NZ_CP053098.1"/>
</dbReference>
<dbReference type="SMR" id="A3M1A8"/>
<dbReference type="MEROPS" id="M17.003"/>
<dbReference type="KEGG" id="acb:A1S_0227"/>
<dbReference type="HOGENOM" id="CLU_013734_2_2_6"/>
<dbReference type="GO" id="GO:0005737">
    <property type="term" value="C:cytoplasm"/>
    <property type="evidence" value="ECO:0007669"/>
    <property type="project" value="UniProtKB-SubCell"/>
</dbReference>
<dbReference type="GO" id="GO:0030145">
    <property type="term" value="F:manganese ion binding"/>
    <property type="evidence" value="ECO:0007669"/>
    <property type="project" value="UniProtKB-UniRule"/>
</dbReference>
<dbReference type="GO" id="GO:0070006">
    <property type="term" value="F:metalloaminopeptidase activity"/>
    <property type="evidence" value="ECO:0007669"/>
    <property type="project" value="InterPro"/>
</dbReference>
<dbReference type="GO" id="GO:0006508">
    <property type="term" value="P:proteolysis"/>
    <property type="evidence" value="ECO:0007669"/>
    <property type="project" value="UniProtKB-KW"/>
</dbReference>
<dbReference type="CDD" id="cd00433">
    <property type="entry name" value="Peptidase_M17"/>
    <property type="match status" value="1"/>
</dbReference>
<dbReference type="FunFam" id="3.40.630.10:FF:000004">
    <property type="entry name" value="Probable cytosol aminopeptidase"/>
    <property type="match status" value="1"/>
</dbReference>
<dbReference type="Gene3D" id="3.40.220.10">
    <property type="entry name" value="Leucine Aminopeptidase, subunit E, domain 1"/>
    <property type="match status" value="1"/>
</dbReference>
<dbReference type="Gene3D" id="3.40.630.10">
    <property type="entry name" value="Zn peptidases"/>
    <property type="match status" value="1"/>
</dbReference>
<dbReference type="HAMAP" id="MF_00181">
    <property type="entry name" value="Cytosol_peptidase_M17"/>
    <property type="match status" value="1"/>
</dbReference>
<dbReference type="InterPro" id="IPR011356">
    <property type="entry name" value="Leucine_aapep/pepB"/>
</dbReference>
<dbReference type="InterPro" id="IPR043472">
    <property type="entry name" value="Macro_dom-like"/>
</dbReference>
<dbReference type="InterPro" id="IPR000819">
    <property type="entry name" value="Peptidase_M17_C"/>
</dbReference>
<dbReference type="InterPro" id="IPR023042">
    <property type="entry name" value="Peptidase_M17_leu_NH2_pept"/>
</dbReference>
<dbReference type="InterPro" id="IPR008283">
    <property type="entry name" value="Peptidase_M17_N"/>
</dbReference>
<dbReference type="NCBIfam" id="NF002074">
    <property type="entry name" value="PRK00913.1-4"/>
    <property type="match status" value="1"/>
</dbReference>
<dbReference type="PANTHER" id="PTHR11963:SF23">
    <property type="entry name" value="CYTOSOL AMINOPEPTIDASE"/>
    <property type="match status" value="1"/>
</dbReference>
<dbReference type="PANTHER" id="PTHR11963">
    <property type="entry name" value="LEUCINE AMINOPEPTIDASE-RELATED"/>
    <property type="match status" value="1"/>
</dbReference>
<dbReference type="Pfam" id="PF00883">
    <property type="entry name" value="Peptidase_M17"/>
    <property type="match status" value="1"/>
</dbReference>
<dbReference type="Pfam" id="PF02789">
    <property type="entry name" value="Peptidase_M17_N"/>
    <property type="match status" value="1"/>
</dbReference>
<dbReference type="PRINTS" id="PR00481">
    <property type="entry name" value="LAMNOPPTDASE"/>
</dbReference>
<dbReference type="SUPFAM" id="SSF52949">
    <property type="entry name" value="Macro domain-like"/>
    <property type="match status" value="1"/>
</dbReference>
<dbReference type="SUPFAM" id="SSF53187">
    <property type="entry name" value="Zn-dependent exopeptidases"/>
    <property type="match status" value="1"/>
</dbReference>
<dbReference type="PROSITE" id="PS00631">
    <property type="entry name" value="CYTOSOL_AP"/>
    <property type="match status" value="1"/>
</dbReference>
<reference key="1">
    <citation type="journal article" date="2007" name="Genes Dev.">
        <title>New insights into Acinetobacter baumannii pathogenesis revealed by high-density pyrosequencing and transposon mutagenesis.</title>
        <authorList>
            <person name="Smith M.G."/>
            <person name="Gianoulis T.A."/>
            <person name="Pukatzki S."/>
            <person name="Mekalanos J.J."/>
            <person name="Ornston L.N."/>
            <person name="Gerstein M."/>
            <person name="Snyder M."/>
        </authorList>
    </citation>
    <scope>NUCLEOTIDE SEQUENCE [LARGE SCALE GENOMIC DNA]</scope>
    <source>
        <strain>ATCC 17978 / DSM 105126 / CIP 53.77 / LMG 1025 / NCDC KC755 / 5377</strain>
    </source>
</reference>
<feature type="chain" id="PRO_1000098298" description="Probable cytosol aminopeptidase">
    <location>
        <begin position="1"/>
        <end position="482"/>
    </location>
</feature>
<feature type="active site" evidence="1">
    <location>
        <position position="263"/>
    </location>
</feature>
<feature type="active site" evidence="1">
    <location>
        <position position="337"/>
    </location>
</feature>
<feature type="binding site" evidence="1">
    <location>
        <position position="251"/>
    </location>
    <ligand>
        <name>Mn(2+)</name>
        <dbReference type="ChEBI" id="CHEBI:29035"/>
        <label>2</label>
    </ligand>
</feature>
<feature type="binding site" evidence="1">
    <location>
        <position position="256"/>
    </location>
    <ligand>
        <name>Mn(2+)</name>
        <dbReference type="ChEBI" id="CHEBI:29035"/>
        <label>1</label>
    </ligand>
</feature>
<feature type="binding site" evidence="1">
    <location>
        <position position="256"/>
    </location>
    <ligand>
        <name>Mn(2+)</name>
        <dbReference type="ChEBI" id="CHEBI:29035"/>
        <label>2</label>
    </ligand>
</feature>
<feature type="binding site" evidence="1">
    <location>
        <position position="274"/>
    </location>
    <ligand>
        <name>Mn(2+)</name>
        <dbReference type="ChEBI" id="CHEBI:29035"/>
        <label>2</label>
    </ligand>
</feature>
<feature type="binding site" evidence="1">
    <location>
        <position position="333"/>
    </location>
    <ligand>
        <name>Mn(2+)</name>
        <dbReference type="ChEBI" id="CHEBI:29035"/>
        <label>1</label>
    </ligand>
</feature>
<feature type="binding site" evidence="1">
    <location>
        <position position="335"/>
    </location>
    <ligand>
        <name>Mn(2+)</name>
        <dbReference type="ChEBI" id="CHEBI:29035"/>
        <label>1</label>
    </ligand>
</feature>
<feature type="binding site" evidence="1">
    <location>
        <position position="335"/>
    </location>
    <ligand>
        <name>Mn(2+)</name>
        <dbReference type="ChEBI" id="CHEBI:29035"/>
        <label>2</label>
    </ligand>
</feature>
<gene>
    <name evidence="1" type="primary">pepA</name>
    <name type="ordered locus">A1S_0227</name>
</gene>
<proteinExistence type="inferred from homology"/>
<evidence type="ECO:0000255" key="1">
    <source>
        <dbReference type="HAMAP-Rule" id="MF_00181"/>
    </source>
</evidence>
<keyword id="KW-0031">Aminopeptidase</keyword>
<keyword id="KW-0963">Cytoplasm</keyword>
<keyword id="KW-0378">Hydrolase</keyword>
<keyword id="KW-0464">Manganese</keyword>
<keyword id="KW-0479">Metal-binding</keyword>
<keyword id="KW-0645">Protease</keyword>
<organism>
    <name type="scientific">Acinetobacter baumannii (strain ATCC 17978 / DSM 105126 / CIP 53.77 / LMG 1025 / NCDC KC755 / 5377)</name>
    <dbReference type="NCBI Taxonomy" id="400667"/>
    <lineage>
        <taxon>Bacteria</taxon>
        <taxon>Pseudomonadati</taxon>
        <taxon>Pseudomonadota</taxon>
        <taxon>Gammaproteobacteria</taxon>
        <taxon>Moraxellales</taxon>
        <taxon>Moraxellaceae</taxon>
        <taxon>Acinetobacter</taxon>
        <taxon>Acinetobacter calcoaceticus/baumannii complex</taxon>
    </lineage>
</organism>
<sequence length="482" mass="52177">MKFTTYTTFPEQTSNESLWILVDSEQLQSNLNTYQINNLESILTATQFKANFNETLPLFGQLSTQPHSQLLGLGKAAELQAAKLAKLAQTIIKSAQNKFKHIAIDIAALPVEYHYLFALSLTQAAYGYDEFKSKKNEFVLQQVDLISSQTSLDENQLALVHAVQSGQSYARDLGNRPGNICFPEYLAEQALALAAEFPDLLKVTVLNEQQMADLGMYAFLAVSKGSERPGRIVTLEYQAQLEQAPVVLVGKGVTFDTGGISLKPGLGMDEMKFDMCGAASVLGTIRALCEARLPIHVVGAIAAAENMPSGKATRPGDIVTTMSGQTVEILNTDAEGRLVLCDTLTYIKRFNPAVVIDIATLTGACVVALGKVLSGLFSPDDTLAAELQQAGEQSFDRVWRMPVIDDYQELLDSPFADIANIGGPHGGAITAACFLERFTRDYRWAHLDVAGTAWLSGSAKGATGRPVPLLMQFLANRVSTNG</sequence>
<name>AMPA_ACIBT</name>
<accession>A3M1A8</accession>
<comment type="function">
    <text evidence="1">Presumably involved in the processing and regular turnover of intracellular proteins. Catalyzes the removal of unsubstituted N-terminal amino acids from various peptides.</text>
</comment>
<comment type="catalytic activity">
    <reaction evidence="1">
        <text>Release of an N-terminal amino acid, Xaa-|-Yaa-, in which Xaa is preferably Leu, but may be other amino acids including Pro although not Arg or Lys, and Yaa may be Pro. Amino acid amides and methyl esters are also readily hydrolyzed, but rates on arylamides are exceedingly low.</text>
        <dbReference type="EC" id="3.4.11.1"/>
    </reaction>
</comment>
<comment type="catalytic activity">
    <reaction evidence="1">
        <text>Release of an N-terminal amino acid, preferentially leucine, but not glutamic or aspartic acids.</text>
        <dbReference type="EC" id="3.4.11.10"/>
    </reaction>
</comment>
<comment type="cofactor">
    <cofactor evidence="1">
        <name>Mn(2+)</name>
        <dbReference type="ChEBI" id="CHEBI:29035"/>
    </cofactor>
    <text evidence="1">Binds 2 manganese ions per subunit.</text>
</comment>
<comment type="subcellular location">
    <subcellularLocation>
        <location evidence="1">Cytoplasm</location>
    </subcellularLocation>
</comment>
<comment type="similarity">
    <text evidence="1">Belongs to the peptidase M17 family.</text>
</comment>